<comment type="function">
    <text evidence="2">Specifically catalyzes the NAD or NADP-dependent dehydrogenation of L-aspartate to iminoaspartate. Does not show aspartate oxidase activity. Is also able to catalyze the reverse reaction, i.e. the reductive amination of oxaloacetate.</text>
</comment>
<comment type="catalytic activity">
    <reaction evidence="1 2">
        <text>L-aspartate + NADP(+) + H2O = oxaloacetate + NH4(+) + NADPH + H(+)</text>
        <dbReference type="Rhea" id="RHEA:11784"/>
        <dbReference type="ChEBI" id="CHEBI:15377"/>
        <dbReference type="ChEBI" id="CHEBI:15378"/>
        <dbReference type="ChEBI" id="CHEBI:16452"/>
        <dbReference type="ChEBI" id="CHEBI:28938"/>
        <dbReference type="ChEBI" id="CHEBI:29991"/>
        <dbReference type="ChEBI" id="CHEBI:57783"/>
        <dbReference type="ChEBI" id="CHEBI:58349"/>
        <dbReference type="EC" id="1.4.1.21"/>
    </reaction>
</comment>
<comment type="catalytic activity">
    <reaction evidence="1 2">
        <text>L-aspartate + NAD(+) + H2O = oxaloacetate + NH4(+) + NADH + H(+)</text>
        <dbReference type="Rhea" id="RHEA:11788"/>
        <dbReference type="ChEBI" id="CHEBI:15377"/>
        <dbReference type="ChEBI" id="CHEBI:15378"/>
        <dbReference type="ChEBI" id="CHEBI:16452"/>
        <dbReference type="ChEBI" id="CHEBI:28938"/>
        <dbReference type="ChEBI" id="CHEBI:29991"/>
        <dbReference type="ChEBI" id="CHEBI:57540"/>
        <dbReference type="ChEBI" id="CHEBI:57945"/>
        <dbReference type="EC" id="1.4.1.21"/>
    </reaction>
</comment>
<comment type="activity regulation">
    <text evidence="2">Competitively inhibited by L-malate and NH(4)(+).</text>
</comment>
<comment type="biophysicochemical properties">
    <kinetics>
        <KM evidence="2">0.067 mM for L-aspartate (in the presence of NAD)</KM>
        <KM evidence="2">1.2 mM for L-aspartate (in the presence of NADP)</KM>
        <KM evidence="2">0.25 mM for NAD</KM>
        <KM evidence="2">0.72 mM for NADP</KM>
    </kinetics>
</comment>
<comment type="pathway">
    <text evidence="1">Cofactor biosynthesis; NAD(+) biosynthesis; iminoaspartate from L-aspartate (dehydrogenase route): step 1/1.</text>
</comment>
<comment type="subunit">
    <text evidence="5">Homodimer.</text>
</comment>
<comment type="miscellaneous">
    <text evidence="1">The iminoaspartate product is unstable in aqueous solution and can decompose to oxaloacetate and ammonia.</text>
</comment>
<comment type="similarity">
    <text evidence="1 4">Belongs to the L-aspartate dehydrogenase family.</text>
</comment>
<gene>
    <name evidence="1" type="primary">nadX</name>
    <name type="ordered locus">TM_1643</name>
</gene>
<organism>
    <name type="scientific">Thermotoga maritima (strain ATCC 43589 / DSM 3109 / JCM 10099 / NBRC 100826 / MSB8)</name>
    <dbReference type="NCBI Taxonomy" id="243274"/>
    <lineage>
        <taxon>Bacteria</taxon>
        <taxon>Thermotogati</taxon>
        <taxon>Thermotogota</taxon>
        <taxon>Thermotogae</taxon>
        <taxon>Thermotogales</taxon>
        <taxon>Thermotogaceae</taxon>
        <taxon>Thermotoga</taxon>
    </lineage>
</organism>
<reference key="1">
    <citation type="journal article" date="1999" name="Nature">
        <title>Evidence for lateral gene transfer between Archaea and Bacteria from genome sequence of Thermotoga maritima.</title>
        <authorList>
            <person name="Nelson K.E."/>
            <person name="Clayton R.A."/>
            <person name="Gill S.R."/>
            <person name="Gwinn M.L."/>
            <person name="Dodson R.J."/>
            <person name="Haft D.H."/>
            <person name="Hickey E.K."/>
            <person name="Peterson J.D."/>
            <person name="Nelson W.C."/>
            <person name="Ketchum K.A."/>
            <person name="McDonald L.A."/>
            <person name="Utterback T.R."/>
            <person name="Malek J.A."/>
            <person name="Linher K.D."/>
            <person name="Garrett M.M."/>
            <person name="Stewart A.M."/>
            <person name="Cotton M.D."/>
            <person name="Pratt M.S."/>
            <person name="Phillips C.A."/>
            <person name="Richardson D.L."/>
            <person name="Heidelberg J.F."/>
            <person name="Sutton G.G."/>
            <person name="Fleischmann R.D."/>
            <person name="Eisen J.A."/>
            <person name="White O."/>
            <person name="Salzberg S.L."/>
            <person name="Smith H.O."/>
            <person name="Venter J.C."/>
            <person name="Fraser C.M."/>
        </authorList>
    </citation>
    <scope>NUCLEOTIDE SEQUENCE [LARGE SCALE GENOMIC DNA]</scope>
    <source>
        <strain>ATCC 43589 / DSM 3109 / JCM 10099 / NBRC 100826 / MSB8</strain>
    </source>
</reference>
<reference key="2">
    <citation type="submission" date="2002-07" db="PDB data bank">
        <title>Crystal structure of aspartate dehydrogenase (TM1643) from Thermotoga maritima at 1.9 A resolution.</title>
        <authorList>
            <consortium name="Joint center for structural genomics (JCSG)"/>
        </authorList>
    </citation>
    <scope>X-RAY CRYSTALLOGRAPHY (1.9 ANGSTROMS) IN COMPLEX WITH NAD</scope>
</reference>
<reference key="3">
    <citation type="journal article" date="2003" name="J. Biol. Chem.">
        <title>Aspartate dehydrogenase, a novel enzyme identified from structural and functional studies of TM1643.</title>
        <authorList>
            <person name="Yang Z."/>
            <person name="Savchenko A."/>
            <person name="Yakunin A.F."/>
            <person name="Zhang R."/>
            <person name="Edwards A.M."/>
            <person name="Arrowsmith C.H."/>
            <person name="Tong L."/>
        </authorList>
    </citation>
    <scope>X-RAY CRYSTALLOGRAPHY (2.6 ANGSTROMS) OF 2-241 IN COMPLEX WITH NAD</scope>
    <scope>FUNCTION</scope>
    <scope>CATALYTIC ACTIVITY</scope>
    <scope>ACTIVITY REGULATION</scope>
    <scope>BIOPHYSICOCHEMICAL PROPERTIES</scope>
    <scope>SUBUNIT</scope>
    <scope>ACTIVE SITE</scope>
</reference>
<proteinExistence type="evidence at protein level"/>
<evidence type="ECO:0000255" key="1">
    <source>
        <dbReference type="HAMAP-Rule" id="MF_01265"/>
    </source>
</evidence>
<evidence type="ECO:0000269" key="2">
    <source>
    </source>
</evidence>
<evidence type="ECO:0000269" key="3">
    <source ref="2"/>
</evidence>
<evidence type="ECO:0000305" key="4"/>
<evidence type="ECO:0000305" key="5">
    <source>
    </source>
</evidence>
<evidence type="ECO:0007744" key="6">
    <source>
        <dbReference type="PDB" id="1H2H"/>
    </source>
</evidence>
<evidence type="ECO:0007744" key="7">
    <source>
        <dbReference type="PDB" id="1J5P"/>
    </source>
</evidence>
<evidence type="ECO:0007829" key="8">
    <source>
        <dbReference type="PDB" id="1J5P"/>
    </source>
</evidence>
<dbReference type="EC" id="1.4.1.21" evidence="1 2"/>
<dbReference type="EMBL" id="AE000512">
    <property type="protein sequence ID" value="AAD36710.1"/>
    <property type="molecule type" value="Genomic_DNA"/>
</dbReference>
<dbReference type="PIR" id="H72226">
    <property type="entry name" value="H72226"/>
</dbReference>
<dbReference type="RefSeq" id="NP_229443.1">
    <property type="nucleotide sequence ID" value="NC_000853.1"/>
</dbReference>
<dbReference type="RefSeq" id="WP_004082138.1">
    <property type="nucleotide sequence ID" value="NZ_CP011107.1"/>
</dbReference>
<dbReference type="PDB" id="1H2H">
    <property type="method" value="X-ray"/>
    <property type="resolution" value="2.60 A"/>
    <property type="chains" value="A=1-241"/>
</dbReference>
<dbReference type="PDB" id="1J5P">
    <property type="method" value="X-ray"/>
    <property type="resolution" value="1.90 A"/>
    <property type="chains" value="A=1-241"/>
</dbReference>
<dbReference type="PDBsum" id="1H2H"/>
<dbReference type="PDBsum" id="1J5P"/>
<dbReference type="SMR" id="Q9X1X6"/>
<dbReference type="STRING" id="243274.TM_1643"/>
<dbReference type="PaxDb" id="243274-THEMA_06030"/>
<dbReference type="EnsemblBacteria" id="AAD36710">
    <property type="protein sequence ID" value="AAD36710"/>
    <property type="gene ID" value="TM_1643"/>
</dbReference>
<dbReference type="KEGG" id="tma:TM1643"/>
<dbReference type="KEGG" id="tmi:THEMA_06030"/>
<dbReference type="KEGG" id="tmm:Tmari_1652"/>
<dbReference type="KEGG" id="tmw:THMA_1684"/>
<dbReference type="eggNOG" id="COG1712">
    <property type="taxonomic scope" value="Bacteria"/>
</dbReference>
<dbReference type="InParanoid" id="Q9X1X6"/>
<dbReference type="OrthoDB" id="1906017at2"/>
<dbReference type="BioCyc" id="MetaCyc:MONOMER-21958"/>
<dbReference type="BRENDA" id="1.4.1.21">
    <property type="organism ID" value="6331"/>
</dbReference>
<dbReference type="SABIO-RK" id="Q9X1X6"/>
<dbReference type="UniPathway" id="UPA00253">
    <property type="reaction ID" value="UER00456"/>
</dbReference>
<dbReference type="EvolutionaryTrace" id="Q9X1X6"/>
<dbReference type="Proteomes" id="UP000008183">
    <property type="component" value="Chromosome"/>
</dbReference>
<dbReference type="GO" id="GO:0033735">
    <property type="term" value="F:aspartate dehydrogenase activity"/>
    <property type="evidence" value="ECO:0007669"/>
    <property type="project" value="UniProtKB-EC"/>
</dbReference>
<dbReference type="GO" id="GO:0051287">
    <property type="term" value="F:NAD binding"/>
    <property type="evidence" value="ECO:0007669"/>
    <property type="project" value="UniProtKB-UniRule"/>
</dbReference>
<dbReference type="GO" id="GO:0050661">
    <property type="term" value="F:NADP binding"/>
    <property type="evidence" value="ECO:0007669"/>
    <property type="project" value="UniProtKB-UniRule"/>
</dbReference>
<dbReference type="GO" id="GO:0016639">
    <property type="term" value="F:oxidoreductase activity, acting on the CH-NH2 group of donors, NAD or NADP as acceptor"/>
    <property type="evidence" value="ECO:0007669"/>
    <property type="project" value="UniProtKB-UniRule"/>
</dbReference>
<dbReference type="GO" id="GO:0009435">
    <property type="term" value="P:NAD biosynthetic process"/>
    <property type="evidence" value="ECO:0007669"/>
    <property type="project" value="UniProtKB-UniRule"/>
</dbReference>
<dbReference type="Gene3D" id="3.30.360.10">
    <property type="entry name" value="Dihydrodipicolinate Reductase, domain 2"/>
    <property type="match status" value="1"/>
</dbReference>
<dbReference type="Gene3D" id="3.40.50.720">
    <property type="entry name" value="NAD(P)-binding Rossmann-like Domain"/>
    <property type="match status" value="1"/>
</dbReference>
<dbReference type="HAMAP" id="MF_01265">
    <property type="entry name" value="NadX"/>
    <property type="match status" value="1"/>
</dbReference>
<dbReference type="InterPro" id="IPR005106">
    <property type="entry name" value="Asp/hSer_DH_NAD-bd"/>
</dbReference>
<dbReference type="InterPro" id="IPR002811">
    <property type="entry name" value="Asp_DH"/>
</dbReference>
<dbReference type="InterPro" id="IPR022487">
    <property type="entry name" value="Asp_DH_arc"/>
</dbReference>
<dbReference type="InterPro" id="IPR020626">
    <property type="entry name" value="Asp_DH_prok"/>
</dbReference>
<dbReference type="InterPro" id="IPR011182">
    <property type="entry name" value="L-Asp_DH"/>
</dbReference>
<dbReference type="InterPro" id="IPR036291">
    <property type="entry name" value="NAD(P)-bd_dom_sf"/>
</dbReference>
<dbReference type="NCBIfam" id="TIGR03855">
    <property type="entry name" value="NAD_NadX"/>
    <property type="match status" value="1"/>
</dbReference>
<dbReference type="NCBIfam" id="NF009829">
    <property type="entry name" value="PRK13303.1-4"/>
    <property type="match status" value="1"/>
</dbReference>
<dbReference type="PANTHER" id="PTHR31873:SF6">
    <property type="entry name" value="ASPARTATE DEHYDROGENASE DOMAIN-CONTAINING PROTEIN"/>
    <property type="match status" value="1"/>
</dbReference>
<dbReference type="PANTHER" id="PTHR31873">
    <property type="entry name" value="L-ASPARTATE DEHYDROGENASE-RELATED"/>
    <property type="match status" value="1"/>
</dbReference>
<dbReference type="Pfam" id="PF01958">
    <property type="entry name" value="Asp_DH_C"/>
    <property type="match status" value="1"/>
</dbReference>
<dbReference type="Pfam" id="PF03447">
    <property type="entry name" value="NAD_binding_3"/>
    <property type="match status" value="1"/>
</dbReference>
<dbReference type="PIRSF" id="PIRSF005227">
    <property type="entry name" value="Asp_dh_NAD_syn"/>
    <property type="match status" value="1"/>
</dbReference>
<dbReference type="SUPFAM" id="SSF55347">
    <property type="entry name" value="Glyceraldehyde-3-phosphate dehydrogenase-like, C-terminal domain"/>
    <property type="match status" value="1"/>
</dbReference>
<dbReference type="SUPFAM" id="SSF51735">
    <property type="entry name" value="NAD(P)-binding Rossmann-fold domains"/>
    <property type="match status" value="1"/>
</dbReference>
<sequence>MTVLIIGMGNIGKKLVELGNFEKIYAYDRISKDIPGVVRLDEFQVPSDVSTVVECASPEAVKEYSLQILKNPVNYIIISTSAFADEVFRERFFSELKNSPARVFFPSGAIGGLDVLSSIKDFVKNVRIETIKPPKSLGLDLKGKTVVFEGSVEEASKLFPRNINVASTIGLIVGFEKVKVTIVADPAMDHNIHIVRISSAIGNYEFKIENIPSPENPKTSMLTVYSILRTLRNLESKIIFG</sequence>
<feature type="chain" id="PRO_0000144893" description="L-aspartate dehydrogenase">
    <location>
        <begin position="1"/>
        <end position="241"/>
    </location>
</feature>
<feature type="active site" evidence="1 5">
    <location>
        <position position="193"/>
    </location>
</feature>
<feature type="binding site" evidence="2 3 6 7">
    <location>
        <begin position="10"/>
        <end position="11"/>
    </location>
    <ligand>
        <name>NAD(+)</name>
        <dbReference type="ChEBI" id="CHEBI:57540"/>
    </ligand>
</feature>
<feature type="binding site" evidence="2 3 6 7">
    <location>
        <position position="28"/>
    </location>
    <ligand>
        <name>NAD(+)</name>
        <dbReference type="ChEBI" id="CHEBI:57540"/>
    </ligand>
</feature>
<feature type="binding site" evidence="2 3 6 7">
    <location>
        <begin position="56"/>
        <end position="57"/>
    </location>
    <ligand>
        <name>NAD(+)</name>
        <dbReference type="ChEBI" id="CHEBI:57540"/>
    </ligand>
</feature>
<feature type="binding site" evidence="2 3 6 7">
    <location>
        <begin position="63"/>
        <end position="64"/>
    </location>
    <ligand>
        <name>NAD(+)</name>
        <dbReference type="ChEBI" id="CHEBI:57540"/>
    </ligand>
</feature>
<feature type="binding site" evidence="2 3 6 7">
    <location>
        <begin position="78"/>
        <end position="79"/>
    </location>
    <ligand>
        <name>NAD(+)</name>
        <dbReference type="ChEBI" id="CHEBI:57540"/>
    </ligand>
</feature>
<feature type="binding site" evidence="1 2 3 6 7">
    <location>
        <position position="109"/>
    </location>
    <ligand>
        <name>NAD(+)</name>
        <dbReference type="ChEBI" id="CHEBI:57540"/>
    </ligand>
</feature>
<feature type="binding site" evidence="1 2 3 6 7">
    <location>
        <position position="164"/>
    </location>
    <ligand>
        <name>NAD(+)</name>
        <dbReference type="ChEBI" id="CHEBI:57540"/>
    </ligand>
</feature>
<feature type="strand" evidence="8">
    <location>
        <begin position="2"/>
        <end position="6"/>
    </location>
</feature>
<feature type="helix" evidence="8">
    <location>
        <begin position="10"/>
        <end position="18"/>
    </location>
</feature>
<feature type="strand" evidence="8">
    <location>
        <begin position="22"/>
        <end position="27"/>
    </location>
</feature>
<feature type="strand" evidence="8">
    <location>
        <begin position="35"/>
        <end position="39"/>
    </location>
</feature>
<feature type="strand" evidence="8">
    <location>
        <begin position="51"/>
        <end position="54"/>
    </location>
</feature>
<feature type="helix" evidence="8">
    <location>
        <begin position="58"/>
        <end position="68"/>
    </location>
</feature>
<feature type="strand" evidence="8">
    <location>
        <begin position="71"/>
        <end position="77"/>
    </location>
</feature>
<feature type="helix" evidence="8">
    <location>
        <begin position="80"/>
        <end position="84"/>
    </location>
</feature>
<feature type="helix" evidence="8">
    <location>
        <begin position="86"/>
        <end position="97"/>
    </location>
</feature>
<feature type="strand" evidence="8">
    <location>
        <begin position="102"/>
        <end position="104"/>
    </location>
</feature>
<feature type="helix" evidence="8">
    <location>
        <begin position="113"/>
        <end position="119"/>
    </location>
</feature>
<feature type="helix" evidence="8">
    <location>
        <begin position="120"/>
        <end position="122"/>
    </location>
</feature>
<feature type="strand" evidence="8">
    <location>
        <begin position="123"/>
        <end position="132"/>
    </location>
</feature>
<feature type="helix" evidence="8">
    <location>
        <begin position="134"/>
        <end position="137"/>
    </location>
</feature>
<feature type="strand" evidence="8">
    <location>
        <begin position="145"/>
        <end position="150"/>
    </location>
</feature>
<feature type="helix" evidence="8">
    <location>
        <begin position="152"/>
        <end position="158"/>
    </location>
</feature>
<feature type="strand" evidence="8">
    <location>
        <begin position="160"/>
        <end position="162"/>
    </location>
</feature>
<feature type="helix" evidence="8">
    <location>
        <begin position="164"/>
        <end position="173"/>
    </location>
</feature>
<feature type="helix" evidence="8">
    <location>
        <begin position="175"/>
        <end position="177"/>
    </location>
</feature>
<feature type="strand" evidence="8">
    <location>
        <begin position="178"/>
        <end position="184"/>
    </location>
</feature>
<feature type="strand" evidence="8">
    <location>
        <begin position="192"/>
        <end position="201"/>
    </location>
</feature>
<feature type="strand" evidence="8">
    <location>
        <begin position="203"/>
        <end position="208"/>
    </location>
</feature>
<feature type="helix" evidence="8">
    <location>
        <begin position="221"/>
        <end position="235"/>
    </location>
</feature>
<name>ASPD_THEMA</name>
<keyword id="KW-0002">3D-structure</keyword>
<keyword id="KW-0520">NAD</keyword>
<keyword id="KW-0521">NADP</keyword>
<keyword id="KW-0560">Oxidoreductase</keyword>
<keyword id="KW-0662">Pyridine nucleotide biosynthesis</keyword>
<keyword id="KW-1185">Reference proteome</keyword>
<accession>Q9X1X6</accession>
<protein>
    <recommendedName>
        <fullName evidence="1 4">L-aspartate dehydrogenase</fullName>
        <ecNumber evidence="1 2">1.4.1.21</ecNumber>
    </recommendedName>
</protein>